<comment type="function">
    <text evidence="1">This is one of the proteins that bind and probably mediate the attachment of the 5S RNA into the large ribosomal subunit, where it forms part of the central protuberance. In the 70S ribosome it contacts protein S13 of the 30S subunit (bridge B1b), connecting the 2 subunits; this bridge is implicated in subunit movement. Contacts the P site tRNA; the 5S rRNA and some of its associated proteins might help stabilize positioning of ribosome-bound tRNAs.</text>
</comment>
<comment type="subunit">
    <text evidence="1">Part of the 50S ribosomal subunit; part of the 5S rRNA/L5/L18/L25 subcomplex. Contacts the 5S rRNA and the P site tRNA. Forms a bridge to the 30S subunit in the 70S ribosome.</text>
</comment>
<comment type="similarity">
    <text evidence="1">Belongs to the universal ribosomal protein uL5 family.</text>
</comment>
<accession>Q8RIG8</accession>
<sequence>MDKYTSRYHKFYDEVVVPKLMKELEIKNIMECPKLEKIIVNMGVGEATQNSKLIDAAMADLTIITGQKPLLRKAKKSEAGFKLREGMPIGAKVTLRKERMYDFLDRLVNVVLPRVRDFEGVPSNSFDGRGNYSVGLRDQLVFPEIDFDKVEKLLGMSITMVSSAKTDEEGRALLKAFGMPFKK</sequence>
<keyword id="KW-1185">Reference proteome</keyword>
<keyword id="KW-0687">Ribonucleoprotein</keyword>
<keyword id="KW-0689">Ribosomal protein</keyword>
<keyword id="KW-0694">RNA-binding</keyword>
<keyword id="KW-0699">rRNA-binding</keyword>
<keyword id="KW-0820">tRNA-binding</keyword>
<reference key="1">
    <citation type="journal article" date="2002" name="J. Bacteriol.">
        <title>Genome sequence and analysis of the oral bacterium Fusobacterium nucleatum strain ATCC 25586.</title>
        <authorList>
            <person name="Kapatral V."/>
            <person name="Anderson I."/>
            <person name="Ivanova N."/>
            <person name="Reznik G."/>
            <person name="Los T."/>
            <person name="Lykidis A."/>
            <person name="Bhattacharyya A."/>
            <person name="Bartman A."/>
            <person name="Gardner W."/>
            <person name="Grechkin G."/>
            <person name="Zhu L."/>
            <person name="Vasieva O."/>
            <person name="Chu L."/>
            <person name="Kogan Y."/>
            <person name="Chaga O."/>
            <person name="Goltsman E."/>
            <person name="Bernal A."/>
            <person name="Larsen N."/>
            <person name="D'Souza M."/>
            <person name="Walunas T."/>
            <person name="Pusch G."/>
            <person name="Haselkorn R."/>
            <person name="Fonstein M."/>
            <person name="Kyrpides N.C."/>
            <person name="Overbeek R."/>
        </authorList>
    </citation>
    <scope>NUCLEOTIDE SEQUENCE [LARGE SCALE GENOMIC DNA]</scope>
    <source>
        <strain>ATCC 25586 / DSM 15643 / BCRC 10681 / CIP 101130 / JCM 8532 / KCTC 2640 / LMG 13131 / VPI 4355</strain>
    </source>
</reference>
<feature type="chain" id="PRO_0000124929" description="Large ribosomal subunit protein uL5">
    <location>
        <begin position="1"/>
        <end position="183"/>
    </location>
</feature>
<evidence type="ECO:0000255" key="1">
    <source>
        <dbReference type="HAMAP-Rule" id="MF_01333"/>
    </source>
</evidence>
<evidence type="ECO:0000305" key="2"/>
<name>RL5_FUSNN</name>
<protein>
    <recommendedName>
        <fullName evidence="1">Large ribosomal subunit protein uL5</fullName>
    </recommendedName>
    <alternativeName>
        <fullName evidence="2">50S ribosomal protein L5</fullName>
    </alternativeName>
</protein>
<dbReference type="EMBL" id="AE009951">
    <property type="protein sequence ID" value="AAL93747.1"/>
    <property type="molecule type" value="Genomic_DNA"/>
</dbReference>
<dbReference type="RefSeq" id="NP_602448.1">
    <property type="nucleotide sequence ID" value="NC_003454.1"/>
</dbReference>
<dbReference type="RefSeq" id="WP_005892302.1">
    <property type="nucleotide sequence ID" value="NZ_CP084110.1"/>
</dbReference>
<dbReference type="SMR" id="Q8RIG8"/>
<dbReference type="FunCoup" id="Q8RIG8">
    <property type="interactions" value="375"/>
</dbReference>
<dbReference type="STRING" id="190304.FN1632"/>
<dbReference type="PaxDb" id="190304-FN1632"/>
<dbReference type="EnsemblBacteria" id="AAL93747">
    <property type="protein sequence ID" value="AAL93747"/>
    <property type="gene ID" value="FN1632"/>
</dbReference>
<dbReference type="GeneID" id="79782571"/>
<dbReference type="KEGG" id="fnu:FN1632"/>
<dbReference type="PATRIC" id="fig|190304.8.peg.125"/>
<dbReference type="eggNOG" id="COG0094">
    <property type="taxonomic scope" value="Bacteria"/>
</dbReference>
<dbReference type="HOGENOM" id="CLU_061015_2_1_0"/>
<dbReference type="InParanoid" id="Q8RIG8"/>
<dbReference type="BioCyc" id="FNUC190304:G1FZS-135-MONOMER"/>
<dbReference type="Proteomes" id="UP000002521">
    <property type="component" value="Chromosome"/>
</dbReference>
<dbReference type="GO" id="GO:0022625">
    <property type="term" value="C:cytosolic large ribosomal subunit"/>
    <property type="evidence" value="ECO:0000318"/>
    <property type="project" value="GO_Central"/>
</dbReference>
<dbReference type="GO" id="GO:0003723">
    <property type="term" value="F:RNA binding"/>
    <property type="evidence" value="ECO:0000318"/>
    <property type="project" value="GO_Central"/>
</dbReference>
<dbReference type="GO" id="GO:0019843">
    <property type="term" value="F:rRNA binding"/>
    <property type="evidence" value="ECO:0007669"/>
    <property type="project" value="UniProtKB-UniRule"/>
</dbReference>
<dbReference type="GO" id="GO:0003735">
    <property type="term" value="F:structural constituent of ribosome"/>
    <property type="evidence" value="ECO:0000318"/>
    <property type="project" value="GO_Central"/>
</dbReference>
<dbReference type="GO" id="GO:0000049">
    <property type="term" value="F:tRNA binding"/>
    <property type="evidence" value="ECO:0007669"/>
    <property type="project" value="UniProtKB-UniRule"/>
</dbReference>
<dbReference type="GO" id="GO:0006412">
    <property type="term" value="P:translation"/>
    <property type="evidence" value="ECO:0000318"/>
    <property type="project" value="GO_Central"/>
</dbReference>
<dbReference type="FunFam" id="3.30.1440.10:FF:000001">
    <property type="entry name" value="50S ribosomal protein L5"/>
    <property type="match status" value="1"/>
</dbReference>
<dbReference type="Gene3D" id="3.30.1440.10">
    <property type="match status" value="1"/>
</dbReference>
<dbReference type="HAMAP" id="MF_01333_B">
    <property type="entry name" value="Ribosomal_uL5_B"/>
    <property type="match status" value="1"/>
</dbReference>
<dbReference type="InterPro" id="IPR002132">
    <property type="entry name" value="Ribosomal_uL5"/>
</dbReference>
<dbReference type="InterPro" id="IPR020930">
    <property type="entry name" value="Ribosomal_uL5_bac-type"/>
</dbReference>
<dbReference type="InterPro" id="IPR031309">
    <property type="entry name" value="Ribosomal_uL5_C"/>
</dbReference>
<dbReference type="InterPro" id="IPR022803">
    <property type="entry name" value="Ribosomal_uL5_dom_sf"/>
</dbReference>
<dbReference type="InterPro" id="IPR031310">
    <property type="entry name" value="Ribosomal_uL5_N"/>
</dbReference>
<dbReference type="NCBIfam" id="NF000585">
    <property type="entry name" value="PRK00010.1"/>
    <property type="match status" value="1"/>
</dbReference>
<dbReference type="PANTHER" id="PTHR11994">
    <property type="entry name" value="60S RIBOSOMAL PROTEIN L11-RELATED"/>
    <property type="match status" value="1"/>
</dbReference>
<dbReference type="Pfam" id="PF00281">
    <property type="entry name" value="Ribosomal_L5"/>
    <property type="match status" value="1"/>
</dbReference>
<dbReference type="Pfam" id="PF00673">
    <property type="entry name" value="Ribosomal_L5_C"/>
    <property type="match status" value="1"/>
</dbReference>
<dbReference type="PIRSF" id="PIRSF002161">
    <property type="entry name" value="Ribosomal_L5"/>
    <property type="match status" value="1"/>
</dbReference>
<dbReference type="SUPFAM" id="SSF55282">
    <property type="entry name" value="RL5-like"/>
    <property type="match status" value="1"/>
</dbReference>
<gene>
    <name evidence="1" type="primary">rplE</name>
    <name type="ordered locus">FN1632</name>
</gene>
<proteinExistence type="inferred from homology"/>
<organism>
    <name type="scientific">Fusobacterium nucleatum subsp. nucleatum (strain ATCC 25586 / DSM 15643 / BCRC 10681 / CIP 101130 / JCM 8532 / KCTC 2640 / LMG 13131 / VPI 4355)</name>
    <dbReference type="NCBI Taxonomy" id="190304"/>
    <lineage>
        <taxon>Bacteria</taxon>
        <taxon>Fusobacteriati</taxon>
        <taxon>Fusobacteriota</taxon>
        <taxon>Fusobacteriia</taxon>
        <taxon>Fusobacteriales</taxon>
        <taxon>Fusobacteriaceae</taxon>
        <taxon>Fusobacterium</taxon>
    </lineage>
</organism>